<dbReference type="EMBL" id="AABR03073819">
    <property type="status" value="NOT_ANNOTATED_CDS"/>
    <property type="molecule type" value="Genomic_DNA"/>
</dbReference>
<dbReference type="EMBL" id="U83590">
    <property type="protein sequence ID" value="AAB62878.1"/>
    <property type="molecule type" value="mRNA"/>
</dbReference>
<dbReference type="PIR" id="T32731">
    <property type="entry name" value="T32731"/>
</dbReference>
<dbReference type="RefSeq" id="NP_113856.2">
    <property type="nucleotide sequence ID" value="NM_031668.2"/>
</dbReference>
<dbReference type="RefSeq" id="XP_006246864.1">
    <property type="nucleotide sequence ID" value="XM_006246802.2"/>
</dbReference>
<dbReference type="FunCoup" id="O35821">
    <property type="interactions" value="2817"/>
</dbReference>
<dbReference type="IntAct" id="O35821">
    <property type="interactions" value="6"/>
</dbReference>
<dbReference type="STRING" id="10116.ENSRNOP00000021134"/>
<dbReference type="iPTMnet" id="O35821"/>
<dbReference type="PhosphoSitePlus" id="O35821"/>
<dbReference type="jPOST" id="O35821"/>
<dbReference type="PaxDb" id="10116-ENSRNOP00000021134"/>
<dbReference type="GeneID" id="60571"/>
<dbReference type="KEGG" id="rno:60571"/>
<dbReference type="AGR" id="RGD:62062"/>
<dbReference type="CTD" id="10514"/>
<dbReference type="RGD" id="62062">
    <property type="gene designation" value="Mybbp1a"/>
</dbReference>
<dbReference type="VEuPathDB" id="HostDB:ENSRNOG00000015236"/>
<dbReference type="eggNOG" id="KOG1926">
    <property type="taxonomic scope" value="Eukaryota"/>
</dbReference>
<dbReference type="HOGENOM" id="CLU_005997_1_0_1"/>
<dbReference type="InParanoid" id="O35821"/>
<dbReference type="PhylomeDB" id="O35821"/>
<dbReference type="TreeFam" id="TF317401"/>
<dbReference type="Reactome" id="R-RNO-5250924">
    <property type="pathway name" value="B-WICH complex positively regulates rRNA expression"/>
</dbReference>
<dbReference type="PRO" id="PR:O35821"/>
<dbReference type="Proteomes" id="UP000002494">
    <property type="component" value="Chromosome 10"/>
</dbReference>
<dbReference type="Bgee" id="ENSRNOG00000015236">
    <property type="expression patterns" value="Expressed in skeletal muscle tissue and 19 other cell types or tissues"/>
</dbReference>
<dbReference type="GO" id="GO:0110016">
    <property type="term" value="C:B-WICH complex"/>
    <property type="evidence" value="ECO:0000266"/>
    <property type="project" value="RGD"/>
</dbReference>
<dbReference type="GO" id="GO:0005737">
    <property type="term" value="C:cytoplasm"/>
    <property type="evidence" value="ECO:0000250"/>
    <property type="project" value="UniProtKB"/>
</dbReference>
<dbReference type="GO" id="GO:0042564">
    <property type="term" value="C:NLS-dependent protein nuclear import complex"/>
    <property type="evidence" value="ECO:0000250"/>
    <property type="project" value="UniProtKB"/>
</dbReference>
<dbReference type="GO" id="GO:0005730">
    <property type="term" value="C:nucleolus"/>
    <property type="evidence" value="ECO:0000250"/>
    <property type="project" value="UniProtKB"/>
</dbReference>
<dbReference type="GO" id="GO:0005634">
    <property type="term" value="C:nucleus"/>
    <property type="evidence" value="ECO:0000250"/>
    <property type="project" value="UniProtKB"/>
</dbReference>
<dbReference type="GO" id="GO:0070888">
    <property type="term" value="F:E-box binding"/>
    <property type="evidence" value="ECO:0000266"/>
    <property type="project" value="RGD"/>
</dbReference>
<dbReference type="GO" id="GO:0043565">
    <property type="term" value="F:sequence-specific DNA binding"/>
    <property type="evidence" value="ECO:0000314"/>
    <property type="project" value="RGD"/>
</dbReference>
<dbReference type="GO" id="GO:0003714">
    <property type="term" value="F:transcription corepressor activity"/>
    <property type="evidence" value="ECO:0000250"/>
    <property type="project" value="UniProtKB"/>
</dbReference>
<dbReference type="GO" id="GO:0042149">
    <property type="term" value="P:cellular response to glucose starvation"/>
    <property type="evidence" value="ECO:0000266"/>
    <property type="project" value="RGD"/>
</dbReference>
<dbReference type="GO" id="GO:0032922">
    <property type="term" value="P:circadian regulation of gene expression"/>
    <property type="evidence" value="ECO:0000250"/>
    <property type="project" value="UniProtKB"/>
</dbReference>
<dbReference type="GO" id="GO:0072332">
    <property type="term" value="P:intrinsic apoptotic signaling pathway by p53 class mediator"/>
    <property type="evidence" value="ECO:0000266"/>
    <property type="project" value="RGD"/>
</dbReference>
<dbReference type="GO" id="GO:0045892">
    <property type="term" value="P:negative regulation of DNA-templated transcription"/>
    <property type="evidence" value="ECO:0000250"/>
    <property type="project" value="UniProtKB"/>
</dbReference>
<dbReference type="GO" id="GO:2000210">
    <property type="term" value="P:positive regulation of anoikis"/>
    <property type="evidence" value="ECO:0000266"/>
    <property type="project" value="RGD"/>
</dbReference>
<dbReference type="GO" id="GO:0045945">
    <property type="term" value="P:positive regulation of transcription by RNA polymerase III"/>
    <property type="evidence" value="ECO:0000266"/>
    <property type="project" value="RGD"/>
</dbReference>
<dbReference type="GO" id="GO:1903450">
    <property type="term" value="P:regulation of G1 to G0 transition"/>
    <property type="evidence" value="ECO:0000266"/>
    <property type="project" value="RGD"/>
</dbReference>
<dbReference type="GO" id="GO:0022904">
    <property type="term" value="P:respiratory electron transport chain"/>
    <property type="evidence" value="ECO:0000266"/>
    <property type="project" value="RGD"/>
</dbReference>
<dbReference type="GO" id="GO:0042254">
    <property type="term" value="P:ribosome biogenesis"/>
    <property type="evidence" value="ECO:0007669"/>
    <property type="project" value="UniProtKB-KW"/>
</dbReference>
<dbReference type="InterPro" id="IPR016024">
    <property type="entry name" value="ARM-type_fold"/>
</dbReference>
<dbReference type="InterPro" id="IPR007015">
    <property type="entry name" value="DNA_pol_V/MYBBP1A"/>
</dbReference>
<dbReference type="PANTHER" id="PTHR13213:SF2">
    <property type="entry name" value="MYB-BINDING PROTEIN 1A"/>
    <property type="match status" value="1"/>
</dbReference>
<dbReference type="PANTHER" id="PTHR13213">
    <property type="entry name" value="MYB-BINDING PROTEIN 1A FAMILY MEMBER"/>
    <property type="match status" value="1"/>
</dbReference>
<dbReference type="Pfam" id="PF04931">
    <property type="entry name" value="DNA_pol_phi"/>
    <property type="match status" value="1"/>
</dbReference>
<dbReference type="SUPFAM" id="SSF48371">
    <property type="entry name" value="ARM repeat"/>
    <property type="match status" value="1"/>
</dbReference>
<feature type="initiator methionine" description="Removed" evidence="1">
    <location>
        <position position="1"/>
    </location>
</feature>
<feature type="chain" id="PRO_0000096257" description="Myb-binding protein 1A">
    <location>
        <begin position="2"/>
        <end position="1344"/>
    </location>
</feature>
<feature type="region of interest" description="Disordered" evidence="3">
    <location>
        <begin position="1"/>
        <end position="24"/>
    </location>
</feature>
<feature type="region of interest" description="Interaction with MYB" evidence="1">
    <location>
        <begin position="2"/>
        <end position="580"/>
    </location>
</feature>
<feature type="region of interest" description="Disordered" evidence="3">
    <location>
        <begin position="696"/>
        <end position="752"/>
    </location>
</feature>
<feature type="region of interest" description="Disordered" evidence="3">
    <location>
        <begin position="1150"/>
        <end position="1344"/>
    </location>
</feature>
<feature type="region of interest" description="Required for nuclear and nucleolar localization" evidence="1">
    <location>
        <begin position="1154"/>
        <end position="1344"/>
    </location>
</feature>
<feature type="short sequence motif" description="Nuclear export signal 1" evidence="1">
    <location>
        <begin position="238"/>
        <end position="256"/>
    </location>
</feature>
<feature type="short sequence motif" description="Nuclear export signal 2" evidence="1">
    <location>
        <begin position="261"/>
        <end position="279"/>
    </location>
</feature>
<feature type="compositionally biased region" description="Basic and acidic residues" evidence="3">
    <location>
        <begin position="708"/>
        <end position="730"/>
    </location>
</feature>
<feature type="compositionally biased region" description="Acidic residues" evidence="3">
    <location>
        <begin position="731"/>
        <end position="746"/>
    </location>
</feature>
<feature type="compositionally biased region" description="Basic and acidic residues" evidence="3">
    <location>
        <begin position="1150"/>
        <end position="1161"/>
    </location>
</feature>
<feature type="compositionally biased region" description="Basic residues" evidence="3">
    <location>
        <begin position="1170"/>
        <end position="1187"/>
    </location>
</feature>
<feature type="compositionally biased region" description="Low complexity" evidence="3">
    <location>
        <begin position="1247"/>
        <end position="1256"/>
    </location>
</feature>
<feature type="compositionally biased region" description="Basic residues" evidence="3">
    <location>
        <begin position="1301"/>
        <end position="1316"/>
    </location>
</feature>
<feature type="compositionally biased region" description="Low complexity" evidence="3">
    <location>
        <begin position="1317"/>
        <end position="1329"/>
    </location>
</feature>
<feature type="compositionally biased region" description="Basic residues" evidence="3">
    <location>
        <begin position="1331"/>
        <end position="1344"/>
    </location>
</feature>
<feature type="modified residue" description="N-acetylalanine" evidence="1">
    <location>
        <position position="2"/>
    </location>
</feature>
<feature type="modified residue" description="Phosphoserine" evidence="5">
    <location>
        <position position="14"/>
    </location>
</feature>
<feature type="modified residue" description="N6-acetyllysine" evidence="2">
    <location>
        <position position="69"/>
    </location>
</feature>
<feature type="modified residue" description="N6-acetyllysine" evidence="2">
    <location>
        <position position="156"/>
    </location>
</feature>
<feature type="modified residue" description="Phosphoserine" evidence="2">
    <location>
        <position position="1162"/>
    </location>
</feature>
<feature type="modified residue" description="Phosphoserine" evidence="5">
    <location>
        <position position="1166"/>
    </location>
</feature>
<feature type="modified residue" description="Phosphoserine" evidence="2">
    <location>
        <position position="1189"/>
    </location>
</feature>
<feature type="modified residue" description="Phosphothreonine" evidence="2">
    <location>
        <position position="1193"/>
    </location>
</feature>
<feature type="modified residue" description="Phosphoserine" evidence="2">
    <location>
        <position position="1221"/>
    </location>
</feature>
<feature type="modified residue" description="Phosphoserine" evidence="2">
    <location>
        <position position="1246"/>
    </location>
</feature>
<feature type="modified residue" description="Phosphothreonine" evidence="2">
    <location>
        <position position="1253"/>
    </location>
</feature>
<feature type="modified residue" description="Phosphoserine" evidence="5">
    <location>
        <position position="1255"/>
    </location>
</feature>
<feature type="modified residue" description="Phosphothreonine" evidence="1">
    <location>
        <position position="1258"/>
    </location>
</feature>
<feature type="modified residue" description="Phosphothreonine" evidence="1">
    <location>
        <position position="1280"/>
    </location>
</feature>
<feature type="modified residue" description="Phosphoserine" evidence="5">
    <location>
        <position position="1283"/>
    </location>
</feature>
<feature type="modified residue" description="Phosphoserine" evidence="2">
    <location>
        <position position="1305"/>
    </location>
</feature>
<feature type="modified residue" description="Phosphoserine" evidence="2">
    <location>
        <position position="1318"/>
    </location>
</feature>
<feature type="modified residue" description="Citrulline" evidence="1">
    <location>
        <position position="1322"/>
    </location>
</feature>
<feature type="modified residue" description="Phosphoserine" evidence="5">
    <location>
        <position position="1323"/>
    </location>
</feature>
<feature type="modified residue" description="Phosphoserine" evidence="5">
    <location>
        <position position="1325"/>
    </location>
</feature>
<feature type="modified residue" description="Phosphoserine" evidence="2">
    <location>
        <position position="1329"/>
    </location>
</feature>
<feature type="cross-link" description="Glycyl lysine isopeptide (Lys-Gly) (interchain with G-Cter in SUMO2)" evidence="2">
    <location>
        <position position="1151"/>
    </location>
</feature>
<feature type="sequence conflict" description="In Ref. 2; AAB62878." evidence="4" ref="2">
    <original>G</original>
    <variation>A</variation>
    <location>
        <position position="137"/>
    </location>
</feature>
<feature type="sequence conflict" description="In Ref. 2; AAB62878." evidence="4" ref="2">
    <original>V</original>
    <variation>D</variation>
    <location>
        <position position="433"/>
    </location>
</feature>
<feature type="sequence conflict" description="In Ref. 2; AAB62878." evidence="4" ref="2">
    <original>L</original>
    <variation>F</variation>
    <location>
        <position position="905"/>
    </location>
</feature>
<feature type="sequence conflict" description="In Ref. 2; AAB62878." evidence="4" ref="2">
    <original>A</original>
    <variation>R</variation>
    <location>
        <position position="1204"/>
    </location>
</feature>
<proteinExistence type="evidence at protein level"/>
<sequence length="1344" mass="152286">MAEMKSPTKAEPASPAEAPQGDRRSLLEHSREFLDFFWDIAKPDQETRLRATEKLLEYLRTRPSDSEMKYALKRLITGLGVGREAARPCYSLALAQLLQSFEDIQLCDILGQIQEKYNLQAMNKAMMRPTLFANLFGVLALFQSGRLVKDKEALMKCVRLLKILSHHYNHLQGQPVKALVDILSEVPESMFQEILPKVLKGDMKVILSSPKYLELFLLARQRVPAELESLVGSVDLFSEDNIPSLVNILKVAANSVKKEQKLPDVALNLLRLALQENKFERFWKEVLEEGLLKKPSYTSSYMCFRLLGASLPLLSDEQLQLVMRGDLIRHFGEHMVVSKSQNPLRFIPEISAYVGTFLEGCQDDPKRQFTVMVAFTAITNQGLPVMPTFWRVTRFLNTEALQNYVTWLRDMFLQPDLDSLVDFSTANQKRVQVASLNVPERTVFRLRKWIIHRLVSLVDHLHLEKDEAVVEQIARFCLFHAFFKTKKATPQIPETKQHFSFPLEDGNRGVIVSAFFSLLQTLSVKFRQTPDLAENGKPWTYRLVQLADMLLKHNRNVANVTPLTAQQRQAWDQMMSTLKELEAQSSETRAIAFQHLLLLVGLHLFKSPAESCDVLGDIQTCIKKSMEQNLRRSRSRAKASQEPVWVEVMVEILLSLLAQPSNLMRQVVRSVFGHVCSHLTPRGLQLILAVLNPETNEDEEDNVVVTDTDEKQLKHGEDADSDSEDSKNSESDVDSEDGEESEEEDRDKDVDPGFRQQLMEVLQAGNALGGEEEEEEELGDEAMMALDQNLASLFAEQKMRIQARHEEKNKLQKEKQLRRDFQIRALDLIEVLVTKQPEHPLILELLEPLLNIIQRSMRSRGSTKQEQDLLHKTARIFMHHLCRARHYCHEVEPGAEALHAQVERLVQQAGNQADASVALYYFNASLYLLRVLKGNTTKRYQDGQKLEGADIKSEPKDSEVQTTSCLDLDFVTRVYSASLESLLTKRNSPLTIPMFLDLFSRYPVICKNLLPIVVQHVAGSSRPRHQAQACLLLQKALSARELRVCFEDPEWEQLISQVLGKTTQTLQTLGEAQSKGEHQRELSILELLNTVFRIVNHEKLSVDLTAFLGMLQGKQQKLQQNLQQGNHSSGSSRLYDLYWQAMNLLGVQRPKSEKKNVKDIPSDSQSPISTKRKKKGFLPETKKRKKLKSEGTTSEKKAASQQDAVTEGAMPAATGKDQPPSTGKKRRKRVKANTPSQVNGVTVAKSPAPNNPTLSPSTPPAKTPKVQKKKEKLSQVNGSTPVSPVEPESKKHQKALSTKEVKRRSSQSALPKKRARLSLVSRSPSLLQSGIRKRRVARRRVQTP</sequence>
<organism>
    <name type="scientific">Rattus norvegicus</name>
    <name type="common">Rat</name>
    <dbReference type="NCBI Taxonomy" id="10116"/>
    <lineage>
        <taxon>Eukaryota</taxon>
        <taxon>Metazoa</taxon>
        <taxon>Chordata</taxon>
        <taxon>Craniata</taxon>
        <taxon>Vertebrata</taxon>
        <taxon>Euteleostomi</taxon>
        <taxon>Mammalia</taxon>
        <taxon>Eutheria</taxon>
        <taxon>Euarchontoglires</taxon>
        <taxon>Glires</taxon>
        <taxon>Rodentia</taxon>
        <taxon>Myomorpha</taxon>
        <taxon>Muroidea</taxon>
        <taxon>Muridae</taxon>
        <taxon>Murinae</taxon>
        <taxon>Rattus</taxon>
    </lineage>
</organism>
<name>MBB1A_RAT</name>
<accession>O35821</accession>
<protein>
    <recommendedName>
        <fullName>Myb-binding protein 1A</fullName>
    </recommendedName>
    <alternativeName>
        <fullName>PAR-interacting protein</fullName>
        <shortName>PIP</shortName>
    </alternativeName>
</protein>
<comment type="function">
    <text evidence="1 2">May activate or repress transcription via interactions with sequence specific DNA-binding proteins (By similarity). Repression may be mediated at least in part by histone deacetylase activity (HDAC activity) (By similarity). Acts as a corepressor and in concert with CRY1, represses the transcription of the core circadian clock component PER2 (By similarity). Preferentially binds to dimethylated histone H3 'Lys-9' (H3K9me2) on the PER2 promoter (By similarity). Has a role in rRNA biogenesis together with PWP1 (By similarity).</text>
</comment>
<comment type="subunit">
    <text evidence="1 2">Binds to and represses JUN and MYB via the leucine zipper regions present in these proteins. Also binds to and represses PPARGC1A: this interaction is abrogated when PPARGC1A is phosphorylated by MAPK1/ERK. Binds to and stimulates transcription by AHR. Binds to KPNA2. Component of the B-WICH complex, at least composed of SMARCA5/SNF2H, BAZ1B/WSTF, SF3B1, DEK, MYO1C, ERCC6, MYBBP1A and DDX21. Interacts with CLOCK and CRY1.</text>
</comment>
<comment type="subcellular location">
    <subcellularLocation>
        <location evidence="1">Nucleus</location>
    </subcellularLocation>
    <subcellularLocation>
        <location evidence="1">Nucleus</location>
        <location evidence="1">Nucleolus</location>
    </subcellularLocation>
    <subcellularLocation>
        <location evidence="1">Cytoplasm</location>
    </subcellularLocation>
    <text evidence="1">Predominantly nucleolar. Also shuttles between the nucleus and cytoplasm. Nuclear import may be mediated by KPNA2, while export appears to depend partially on XPO1/CRM1.</text>
</comment>
<comment type="PTM">
    <text evidence="1">Citrullinated by PADI4.</text>
</comment>
<comment type="similarity">
    <text evidence="4">Belongs to the MYBBP1A family.</text>
</comment>
<evidence type="ECO:0000250" key="1">
    <source>
        <dbReference type="UniProtKB" id="Q7TPV4"/>
    </source>
</evidence>
<evidence type="ECO:0000250" key="2">
    <source>
        <dbReference type="UniProtKB" id="Q9BQG0"/>
    </source>
</evidence>
<evidence type="ECO:0000256" key="3">
    <source>
        <dbReference type="SAM" id="MobiDB-lite"/>
    </source>
</evidence>
<evidence type="ECO:0000305" key="4"/>
<evidence type="ECO:0007744" key="5">
    <source>
    </source>
</evidence>
<reference key="1">
    <citation type="journal article" date="2004" name="Nature">
        <title>Genome sequence of the Brown Norway rat yields insights into mammalian evolution.</title>
        <authorList>
            <person name="Gibbs R.A."/>
            <person name="Weinstock G.M."/>
            <person name="Metzker M.L."/>
            <person name="Muzny D.M."/>
            <person name="Sodergren E.J."/>
            <person name="Scherer S."/>
            <person name="Scott G."/>
            <person name="Steffen D."/>
            <person name="Worley K.C."/>
            <person name="Burch P.E."/>
            <person name="Okwuonu G."/>
            <person name="Hines S."/>
            <person name="Lewis L."/>
            <person name="Deramo C."/>
            <person name="Delgado O."/>
            <person name="Dugan-Rocha S."/>
            <person name="Miner G."/>
            <person name="Morgan M."/>
            <person name="Hawes A."/>
            <person name="Gill R."/>
            <person name="Holt R.A."/>
            <person name="Adams M.D."/>
            <person name="Amanatides P.G."/>
            <person name="Baden-Tillson H."/>
            <person name="Barnstead M."/>
            <person name="Chin S."/>
            <person name="Evans C.A."/>
            <person name="Ferriera S."/>
            <person name="Fosler C."/>
            <person name="Glodek A."/>
            <person name="Gu Z."/>
            <person name="Jennings D."/>
            <person name="Kraft C.L."/>
            <person name="Nguyen T."/>
            <person name="Pfannkoch C.M."/>
            <person name="Sitter C."/>
            <person name="Sutton G.G."/>
            <person name="Venter J.C."/>
            <person name="Woodage T."/>
            <person name="Smith D."/>
            <person name="Lee H.-M."/>
            <person name="Gustafson E."/>
            <person name="Cahill P."/>
            <person name="Kana A."/>
            <person name="Doucette-Stamm L."/>
            <person name="Weinstock K."/>
            <person name="Fechtel K."/>
            <person name="Weiss R.B."/>
            <person name="Dunn D.M."/>
            <person name="Green E.D."/>
            <person name="Blakesley R.W."/>
            <person name="Bouffard G.G."/>
            <person name="De Jong P.J."/>
            <person name="Osoegawa K."/>
            <person name="Zhu B."/>
            <person name="Marra M."/>
            <person name="Schein J."/>
            <person name="Bosdet I."/>
            <person name="Fjell C."/>
            <person name="Jones S."/>
            <person name="Krzywinski M."/>
            <person name="Mathewson C."/>
            <person name="Siddiqui A."/>
            <person name="Wye N."/>
            <person name="McPherson J."/>
            <person name="Zhao S."/>
            <person name="Fraser C.M."/>
            <person name="Shetty J."/>
            <person name="Shatsman S."/>
            <person name="Geer K."/>
            <person name="Chen Y."/>
            <person name="Abramzon S."/>
            <person name="Nierman W.C."/>
            <person name="Havlak P.H."/>
            <person name="Chen R."/>
            <person name="Durbin K.J."/>
            <person name="Egan A."/>
            <person name="Ren Y."/>
            <person name="Song X.-Z."/>
            <person name="Li B."/>
            <person name="Liu Y."/>
            <person name="Qin X."/>
            <person name="Cawley S."/>
            <person name="Cooney A.J."/>
            <person name="D'Souza L.M."/>
            <person name="Martin K."/>
            <person name="Wu J.Q."/>
            <person name="Gonzalez-Garay M.L."/>
            <person name="Jackson A.R."/>
            <person name="Kalafus K.J."/>
            <person name="McLeod M.P."/>
            <person name="Milosavljevic A."/>
            <person name="Virk D."/>
            <person name="Volkov A."/>
            <person name="Wheeler D.A."/>
            <person name="Zhang Z."/>
            <person name="Bailey J.A."/>
            <person name="Eichler E.E."/>
            <person name="Tuzun E."/>
            <person name="Birney E."/>
            <person name="Mongin E."/>
            <person name="Ureta-Vidal A."/>
            <person name="Woodwark C."/>
            <person name="Zdobnov E."/>
            <person name="Bork P."/>
            <person name="Suyama M."/>
            <person name="Torrents D."/>
            <person name="Alexandersson M."/>
            <person name="Trask B.J."/>
            <person name="Young J.M."/>
            <person name="Huang H."/>
            <person name="Wang H."/>
            <person name="Xing H."/>
            <person name="Daniels S."/>
            <person name="Gietzen D."/>
            <person name="Schmidt J."/>
            <person name="Stevens K."/>
            <person name="Vitt U."/>
            <person name="Wingrove J."/>
            <person name="Camara F."/>
            <person name="Mar Alba M."/>
            <person name="Abril J.F."/>
            <person name="Guigo R."/>
            <person name="Smit A."/>
            <person name="Dubchak I."/>
            <person name="Rubin E.M."/>
            <person name="Couronne O."/>
            <person name="Poliakov A."/>
            <person name="Huebner N."/>
            <person name="Ganten D."/>
            <person name="Goesele C."/>
            <person name="Hummel O."/>
            <person name="Kreitler T."/>
            <person name="Lee Y.-A."/>
            <person name="Monti J."/>
            <person name="Schulz H."/>
            <person name="Zimdahl H."/>
            <person name="Himmelbauer H."/>
            <person name="Lehrach H."/>
            <person name="Jacob H.J."/>
            <person name="Bromberg S."/>
            <person name="Gullings-Handley J."/>
            <person name="Jensen-Seaman M.I."/>
            <person name="Kwitek A.E."/>
            <person name="Lazar J."/>
            <person name="Pasko D."/>
            <person name="Tonellato P.J."/>
            <person name="Twigger S."/>
            <person name="Ponting C.P."/>
            <person name="Duarte J.M."/>
            <person name="Rice S."/>
            <person name="Goodstadt L."/>
            <person name="Beatson S.A."/>
            <person name="Emes R.D."/>
            <person name="Winter E.E."/>
            <person name="Webber C."/>
            <person name="Brandt P."/>
            <person name="Nyakatura G."/>
            <person name="Adetobi M."/>
            <person name="Chiaromonte F."/>
            <person name="Elnitski L."/>
            <person name="Eswara P."/>
            <person name="Hardison R.C."/>
            <person name="Hou M."/>
            <person name="Kolbe D."/>
            <person name="Makova K."/>
            <person name="Miller W."/>
            <person name="Nekrutenko A."/>
            <person name="Riemer C."/>
            <person name="Schwartz S."/>
            <person name="Taylor J."/>
            <person name="Yang S."/>
            <person name="Zhang Y."/>
            <person name="Lindpaintner K."/>
            <person name="Andrews T.D."/>
            <person name="Caccamo M."/>
            <person name="Clamp M."/>
            <person name="Clarke L."/>
            <person name="Curwen V."/>
            <person name="Durbin R.M."/>
            <person name="Eyras E."/>
            <person name="Searle S.M."/>
            <person name="Cooper G.M."/>
            <person name="Batzoglou S."/>
            <person name="Brudno M."/>
            <person name="Sidow A."/>
            <person name="Stone E.A."/>
            <person name="Payseur B.A."/>
            <person name="Bourque G."/>
            <person name="Lopez-Otin C."/>
            <person name="Puente X.S."/>
            <person name="Chakrabarti K."/>
            <person name="Chatterji S."/>
            <person name="Dewey C."/>
            <person name="Pachter L."/>
            <person name="Bray N."/>
            <person name="Yap V.B."/>
            <person name="Caspi A."/>
            <person name="Tesler G."/>
            <person name="Pevzner P.A."/>
            <person name="Haussler D."/>
            <person name="Roskin K.M."/>
            <person name="Baertsch R."/>
            <person name="Clawson H."/>
            <person name="Furey T.S."/>
            <person name="Hinrichs A.S."/>
            <person name="Karolchik D."/>
            <person name="Kent W.J."/>
            <person name="Rosenbloom K.R."/>
            <person name="Trumbower H."/>
            <person name="Weirauch M."/>
            <person name="Cooper D.N."/>
            <person name="Stenson P.D."/>
            <person name="Ma B."/>
            <person name="Brent M."/>
            <person name="Arumugam M."/>
            <person name="Shteynberg D."/>
            <person name="Copley R.R."/>
            <person name="Taylor M.S."/>
            <person name="Riethman H."/>
            <person name="Mudunuri U."/>
            <person name="Peterson J."/>
            <person name="Guyer M."/>
            <person name="Felsenfeld A."/>
            <person name="Old S."/>
            <person name="Mockrin S."/>
            <person name="Collins F.S."/>
        </authorList>
    </citation>
    <scope>NUCLEOTIDE SEQUENCE [LARGE SCALE GENOMIC DNA]</scope>
    <source>
        <strain>Brown Norway</strain>
    </source>
</reference>
<reference key="2">
    <citation type="submission" date="1997-01" db="EMBL/GenBank/DDBJ databases">
        <title>Isolation of PIP, a 160 kDa nucleolar protein that interacts with the activation domain of PAR transcription factors.</title>
        <authorList>
            <person name="Comte P.A."/>
            <person name="Ossipow V."/>
            <person name="Schibler U."/>
        </authorList>
    </citation>
    <scope>NUCLEOTIDE SEQUENCE [MRNA] OF 68-1344</scope>
</reference>
<reference key="3">
    <citation type="journal article" date="2012" name="Nat. Commun.">
        <title>Quantitative maps of protein phosphorylation sites across 14 different rat organs and tissues.</title>
        <authorList>
            <person name="Lundby A."/>
            <person name="Secher A."/>
            <person name="Lage K."/>
            <person name="Nordsborg N.B."/>
            <person name="Dmytriyev A."/>
            <person name="Lundby C."/>
            <person name="Olsen J.V."/>
        </authorList>
    </citation>
    <scope>PHOSPHORYLATION [LARGE SCALE ANALYSIS] AT SER-14; SER-1166; SER-1255; SER-1283; SER-1323 AND SER-1325</scope>
    <scope>IDENTIFICATION BY MASS SPECTROMETRY [LARGE SCALE ANALYSIS]</scope>
</reference>
<keyword id="KW-0007">Acetylation</keyword>
<keyword id="KW-0010">Activator</keyword>
<keyword id="KW-0090">Biological rhythms</keyword>
<keyword id="KW-0164">Citrullination</keyword>
<keyword id="KW-0963">Cytoplasm</keyword>
<keyword id="KW-1017">Isopeptide bond</keyword>
<keyword id="KW-0539">Nucleus</keyword>
<keyword id="KW-0597">Phosphoprotein</keyword>
<keyword id="KW-1185">Reference proteome</keyword>
<keyword id="KW-0678">Repressor</keyword>
<keyword id="KW-0690">Ribosome biogenesis</keyword>
<keyword id="KW-0804">Transcription</keyword>
<keyword id="KW-0805">Transcription regulation</keyword>
<keyword id="KW-0832">Ubl conjugation</keyword>
<gene>
    <name type="primary">Mybbp1a</name>
</gene>